<name>PARA_MYCPN</name>
<organism>
    <name type="scientific">Mycoplasma pneumoniae (strain ATCC 29342 / M129 / Subtype 1)</name>
    <name type="common">Mycoplasmoides pneumoniae</name>
    <dbReference type="NCBI Taxonomy" id="272634"/>
    <lineage>
        <taxon>Bacteria</taxon>
        <taxon>Bacillati</taxon>
        <taxon>Mycoplasmatota</taxon>
        <taxon>Mycoplasmoidales</taxon>
        <taxon>Mycoplasmoidaceae</taxon>
        <taxon>Mycoplasmoides</taxon>
    </lineage>
</organism>
<gene>
    <name type="ordered locus">MPN_688</name>
    <name type="ORF">MP154</name>
</gene>
<feature type="chain" id="PRO_0000201987" description="ParA family protein MPN_688">
    <location>
        <begin position="1"/>
        <end position="270"/>
    </location>
</feature>
<reference key="1">
    <citation type="journal article" date="1996" name="Nucleic Acids Res.">
        <title>Sequence analysis of 56 kb from the genome of the bacterium Mycoplasma pneumoniae comprising the dnaA region, the atp operon and a cluster of ribosomal protein genes.</title>
        <authorList>
            <person name="Hilbert H."/>
            <person name="Himmelreich R."/>
            <person name="Plagens H."/>
            <person name="Herrmann R."/>
        </authorList>
    </citation>
    <scope>NUCLEOTIDE SEQUENCE [GENOMIC DNA]</scope>
    <source>
        <strain>ATCC 29342 / M129 / Subtype 1</strain>
    </source>
</reference>
<reference key="2">
    <citation type="journal article" date="1996" name="Nucleic Acids Res.">
        <title>Complete sequence analysis of the genome of the bacterium Mycoplasma pneumoniae.</title>
        <authorList>
            <person name="Himmelreich R."/>
            <person name="Hilbert H."/>
            <person name="Plagens H."/>
            <person name="Pirkl E."/>
            <person name="Li B.-C."/>
            <person name="Herrmann R."/>
        </authorList>
    </citation>
    <scope>NUCLEOTIDE SEQUENCE [LARGE SCALE GENOMIC DNA]</scope>
    <source>
        <strain>ATCC 29342 / M129 / Subtype 1</strain>
    </source>
</reference>
<proteinExistence type="inferred from homology"/>
<sequence>MIISFVNNKGGVLKTTMATNVAGSLVKLCPEQRKVILDLDGQGNVSASFGQNPERLNNTLIDILLKVPKFNGANSSIEIDDCLLPVYEGLDILPCNFELNFADIDIARKKYKASDIAEIVKQLTRRYDFVLLDTPPNMATLVSTAMSLSDVIVIPFEPDQYSMLGLMRIVETIDTFKEKNPNLKTILVPTKVNMRTRLHNDVIELVKSKAHKNNVAFSEHFVSLTSKSSAAVGYEKLPISLVSPTSNKKYQTEYLEITKEILNLVNHGHQ</sequence>
<protein>
    <recommendedName>
        <fullName>ParA family protein MPN_688</fullName>
    </recommendedName>
</protein>
<evidence type="ECO:0000305" key="1"/>
<comment type="similarity">
    <text evidence="1">Belongs to the ParA family.</text>
</comment>
<accession>Q50314</accession>
<dbReference type="EMBL" id="U34816">
    <property type="protein sequence ID" value="AAC43646.1"/>
    <property type="molecule type" value="Genomic_DNA"/>
</dbReference>
<dbReference type="EMBL" id="U00089">
    <property type="protein sequence ID" value="AAB95802.1"/>
    <property type="molecule type" value="Genomic_DNA"/>
</dbReference>
<dbReference type="PIR" id="S62837">
    <property type="entry name" value="S62837"/>
</dbReference>
<dbReference type="RefSeq" id="NP_110377.1">
    <property type="nucleotide sequence ID" value="NC_000912.1"/>
</dbReference>
<dbReference type="RefSeq" id="WP_010875045.1">
    <property type="nucleotide sequence ID" value="NZ_OU342337.1"/>
</dbReference>
<dbReference type="SMR" id="Q50314"/>
<dbReference type="STRING" id="272634.MPN_688"/>
<dbReference type="EnsemblBacteria" id="AAB95802">
    <property type="protein sequence ID" value="AAB95802"/>
    <property type="gene ID" value="MPN_688"/>
</dbReference>
<dbReference type="KEGG" id="mpn:MPN_688"/>
<dbReference type="PATRIC" id="fig|272634.6.peg.755"/>
<dbReference type="HOGENOM" id="CLU_037612_1_4_14"/>
<dbReference type="OrthoDB" id="9791162at2"/>
<dbReference type="BioCyc" id="MPNE272634:G1GJ3-1101-MONOMER"/>
<dbReference type="Proteomes" id="UP000000808">
    <property type="component" value="Chromosome"/>
</dbReference>
<dbReference type="CDD" id="cd02042">
    <property type="entry name" value="ParAB_family"/>
    <property type="match status" value="1"/>
</dbReference>
<dbReference type="Gene3D" id="3.40.50.300">
    <property type="entry name" value="P-loop containing nucleotide triphosphate hydrolases"/>
    <property type="match status" value="1"/>
</dbReference>
<dbReference type="InterPro" id="IPR025669">
    <property type="entry name" value="AAA_dom"/>
</dbReference>
<dbReference type="InterPro" id="IPR050678">
    <property type="entry name" value="DNA_Partitioning_ATPase"/>
</dbReference>
<dbReference type="InterPro" id="IPR027417">
    <property type="entry name" value="P-loop_NTPase"/>
</dbReference>
<dbReference type="PANTHER" id="PTHR13696">
    <property type="entry name" value="P-LOOP CONTAINING NUCLEOSIDE TRIPHOSPHATE HYDROLASE"/>
    <property type="match status" value="1"/>
</dbReference>
<dbReference type="PANTHER" id="PTHR13696:SF52">
    <property type="entry name" value="PARA FAMILY PROTEIN CT_582"/>
    <property type="match status" value="1"/>
</dbReference>
<dbReference type="Pfam" id="PF13614">
    <property type="entry name" value="AAA_31"/>
    <property type="match status" value="1"/>
</dbReference>
<dbReference type="SUPFAM" id="SSF52540">
    <property type="entry name" value="P-loop containing nucleoside triphosphate hydrolases"/>
    <property type="match status" value="1"/>
</dbReference>
<keyword id="KW-1185">Reference proteome</keyword>